<comment type="function">
    <text evidence="1">Component of a hydro-lyase that catalyzes the dehydration of mevalonate 5-phosphate (MVA5P) to form trans-anhydromevalonate 5-phosphate (tAHMP) (By similarity). Involved in the archaeal mevalonate (MVA) pathway, which provides fundamental precursors for isoprenoid biosynthesis, such as isopentenyl diphosphate (IPP) and dimethylallyl diphosphate (DMAPP) (By similarity).</text>
</comment>
<comment type="catalytic activity">
    <reaction evidence="1">
        <text>(R)-5-phosphomevalonate = (2E)-3-methyl-5-phosphooxypent-2-enoate + H2O</text>
        <dbReference type="Rhea" id="RHEA:78975"/>
        <dbReference type="ChEBI" id="CHEBI:15377"/>
        <dbReference type="ChEBI" id="CHEBI:58146"/>
        <dbReference type="ChEBI" id="CHEBI:229665"/>
        <dbReference type="EC" id="4.2.1.182"/>
    </reaction>
    <physiologicalReaction direction="left-to-right" evidence="1">
        <dbReference type="Rhea" id="RHEA:78976"/>
    </physiologicalReaction>
</comment>
<comment type="cofactor">
    <cofactor evidence="5">
        <name>[4Fe-4S] cluster</name>
        <dbReference type="ChEBI" id="CHEBI:49883"/>
    </cofactor>
    <text evidence="2 5">Binds 1 [4Fe-4S] cluster per subunit (Probable). The crystal structure contains a [3Fe-4S] cluster and corresponds to the inactive form (PubMed:34099860). The active enzyme probably contains a [4Fe-4S] cluster under anaerobic conditions (PubMed:34099860).</text>
</comment>
<comment type="pathway">
    <text evidence="1">Isoprenoid biosynthesis; isopentenyl diphosphate biosynthesis via mevalonate pathway.</text>
</comment>
<comment type="subunit">
    <text evidence="2">Heterodimer composed of a large subunit (PMDh-L) and a small subunit (PMDh-S).</text>
</comment>
<comment type="similarity">
    <text evidence="4">Belongs to the AcnX type II large subunit family.</text>
</comment>
<feature type="chain" id="PRO_0000460845" description="Phosphomevalonate dehydratase large subunit">
    <location>
        <begin position="1"/>
        <end position="386"/>
    </location>
</feature>
<feature type="binding site" evidence="2 8">
    <location>
        <position position="48"/>
    </location>
    <ligand>
        <name>(R)-5-phosphomevalonate</name>
        <dbReference type="ChEBI" id="CHEBI:58146"/>
    </ligand>
</feature>
<feature type="binding site" evidence="2 8">
    <location>
        <position position="49"/>
    </location>
    <ligand>
        <name>(R)-5-phosphomevalonate</name>
        <dbReference type="ChEBI" id="CHEBI:58146"/>
    </ligand>
</feature>
<feature type="binding site" evidence="2 8">
    <location>
        <position position="50"/>
    </location>
    <ligand>
        <name>(R)-5-phosphomevalonate</name>
        <dbReference type="ChEBI" id="CHEBI:58146"/>
    </ligand>
</feature>
<feature type="binding site" evidence="2 8">
    <location>
        <position position="53"/>
    </location>
    <ligand>
        <name>(R)-5-phosphomevalonate</name>
        <dbReference type="ChEBI" id="CHEBI:58146"/>
    </ligand>
</feature>
<feature type="binding site" evidence="2 8">
    <location>
        <position position="63"/>
    </location>
    <ligand>
        <name>(R)-5-phosphomevalonate</name>
        <dbReference type="ChEBI" id="CHEBI:58146"/>
    </ligand>
</feature>
<feature type="binding site" evidence="2 8">
    <location>
        <position position="79"/>
    </location>
    <ligand>
        <name>(R)-5-phosphomevalonate</name>
        <dbReference type="ChEBI" id="CHEBI:58146"/>
    </ligand>
</feature>
<feature type="binding site" evidence="2 8">
    <location>
        <position position="80"/>
    </location>
    <ligand>
        <name>(R)-5-phosphomevalonate</name>
        <dbReference type="ChEBI" id="CHEBI:58146"/>
    </ligand>
</feature>
<feature type="binding site" evidence="5 7 8">
    <location>
        <position position="110"/>
    </location>
    <ligand>
        <name>[4Fe-4S] cluster</name>
        <dbReference type="ChEBI" id="CHEBI:49883"/>
    </ligand>
</feature>
<feature type="binding site" evidence="2 8">
    <location>
        <position position="129"/>
    </location>
    <ligand>
        <name>(R)-5-phosphomevalonate</name>
        <dbReference type="ChEBI" id="CHEBI:58146"/>
    </ligand>
</feature>
<feature type="binding site" evidence="2 8">
    <location>
        <position position="130"/>
    </location>
    <ligand>
        <name>(R)-5-phosphomevalonate</name>
        <dbReference type="ChEBI" id="CHEBI:58146"/>
    </ligand>
</feature>
<feature type="binding site" evidence="5 7 8">
    <location>
        <position position="283"/>
    </location>
    <ligand>
        <name>[4Fe-4S] cluster</name>
        <dbReference type="ChEBI" id="CHEBI:49883"/>
    </ligand>
</feature>
<feature type="binding site" evidence="5 7 8">
    <location>
        <position position="342"/>
    </location>
    <ligand>
        <name>[4Fe-4S] cluster</name>
        <dbReference type="ChEBI" id="CHEBI:49883"/>
    </ligand>
</feature>
<feature type="binding site" evidence="2 8">
    <location>
        <position position="361"/>
    </location>
    <ligand>
        <name>(R)-5-phosphomevalonate</name>
        <dbReference type="ChEBI" id="CHEBI:58146"/>
    </ligand>
</feature>
<feature type="helix" evidence="9">
    <location>
        <begin position="5"/>
        <end position="12"/>
    </location>
</feature>
<feature type="turn" evidence="9">
    <location>
        <begin position="13"/>
        <end position="15"/>
    </location>
</feature>
<feature type="helix" evidence="9">
    <location>
        <begin position="17"/>
        <end position="33"/>
    </location>
</feature>
<feature type="strand" evidence="9">
    <location>
        <begin position="37"/>
        <end position="40"/>
    </location>
</feature>
<feature type="strand" evidence="9">
    <location>
        <begin position="44"/>
        <end position="46"/>
    </location>
</feature>
<feature type="helix" evidence="9">
    <location>
        <begin position="51"/>
        <end position="67"/>
    </location>
</feature>
<feature type="strand" evidence="9">
    <location>
        <begin position="76"/>
        <end position="78"/>
    </location>
</feature>
<feature type="helix" evidence="9">
    <location>
        <begin position="86"/>
        <end position="101"/>
    </location>
</feature>
<feature type="turn" evidence="9">
    <location>
        <begin position="112"/>
        <end position="116"/>
    </location>
</feature>
<feature type="helix" evidence="9">
    <location>
        <begin position="130"/>
        <end position="138"/>
    </location>
</feature>
<feature type="helix" evidence="9">
    <location>
        <begin position="149"/>
        <end position="158"/>
    </location>
</feature>
<feature type="strand" evidence="9">
    <location>
        <begin position="160"/>
        <end position="163"/>
    </location>
</feature>
<feature type="helix" evidence="9">
    <location>
        <begin position="165"/>
        <end position="167"/>
    </location>
</feature>
<feature type="helix" evidence="9">
    <location>
        <begin position="169"/>
        <end position="172"/>
    </location>
</feature>
<feature type="strand" evidence="9">
    <location>
        <begin position="175"/>
        <end position="180"/>
    </location>
</feature>
<feature type="helix" evidence="9">
    <location>
        <begin position="187"/>
        <end position="200"/>
    </location>
</feature>
<feature type="strand" evidence="9">
    <location>
        <begin position="206"/>
        <end position="210"/>
    </location>
</feature>
<feature type="helix" evidence="9">
    <location>
        <begin position="216"/>
        <end position="229"/>
    </location>
</feature>
<feature type="turn" evidence="9">
    <location>
        <begin position="238"/>
        <end position="240"/>
    </location>
</feature>
<feature type="helix" evidence="9">
    <location>
        <begin position="244"/>
        <end position="246"/>
    </location>
</feature>
<feature type="strand" evidence="9">
    <location>
        <begin position="254"/>
        <end position="257"/>
    </location>
</feature>
<feature type="helix" evidence="9">
    <location>
        <begin position="259"/>
        <end position="268"/>
    </location>
</feature>
<feature type="helix" evidence="9">
    <location>
        <begin position="273"/>
        <end position="275"/>
    </location>
</feature>
<feature type="strand" evidence="9">
    <location>
        <begin position="278"/>
        <end position="286"/>
    </location>
</feature>
<feature type="helix" evidence="9">
    <location>
        <begin position="288"/>
        <end position="301"/>
    </location>
</feature>
<feature type="strand" evidence="9">
    <location>
        <begin position="309"/>
        <end position="313"/>
    </location>
</feature>
<feature type="helix" evidence="9">
    <location>
        <begin position="315"/>
        <end position="323"/>
    </location>
</feature>
<feature type="helix" evidence="9">
    <location>
        <begin position="326"/>
        <end position="331"/>
    </location>
</feature>
<feature type="turn" evidence="9">
    <location>
        <begin position="332"/>
        <end position="334"/>
    </location>
</feature>
<feature type="strand" evidence="9">
    <location>
        <begin position="335"/>
        <end position="339"/>
    </location>
</feature>
<feature type="turn" evidence="9">
    <location>
        <begin position="349"/>
        <end position="351"/>
    </location>
</feature>
<feature type="strand" evidence="9">
    <location>
        <begin position="353"/>
        <end position="358"/>
    </location>
</feature>
<feature type="helix" evidence="9">
    <location>
        <begin position="360"/>
        <end position="368"/>
    </location>
</feature>
<feature type="strand" evidence="9">
    <location>
        <begin position="372"/>
        <end position="375"/>
    </location>
</feature>
<feature type="helix" evidence="9">
    <location>
        <begin position="378"/>
        <end position="384"/>
    </location>
</feature>
<proteinExistence type="evidence at protein level"/>
<gene>
    <name evidence="6" type="ordered locus">TK1249</name>
</gene>
<protein>
    <recommendedName>
        <fullName evidence="4">Phosphomevalonate dehydratase large subunit</fullName>
        <shortName evidence="4">PMDh large subunit</shortName>
        <shortName evidence="4">PMDh-L</shortName>
        <ecNumber evidence="1">4.2.1.182</ecNumber>
    </recommendedName>
    <alternativeName>
        <fullName evidence="3">AcnXType-II</fullName>
    </alternativeName>
    <alternativeName>
        <fullName evidence="3">Mevalonate 5-phosphate dehydratase large subunit</fullName>
        <shortName evidence="3">MVA5P dehydratase large subunit</shortName>
    </alternativeName>
    <alternativeName>
        <fullName evidence="3">TkAcnXL</fullName>
    </alternativeName>
</protein>
<accession>Q5JGJ6</accession>
<sequence length="386" mass="42362">MYLTKEEELILAGEYGYALQKAMEILVALGDIYGADRLIPIKSAQVAGVSYKNIGDAGIEFLRDFVEAGAKVSVYTTLNPAGIGDDEFMEKQMEVLELYRKMGIEVTSTCTPYYGANLPKFGDHIAWSESSAVSFANSILGARTNREGGPSSLAAAIVGKTPNYGLHLDENRKATVIVDVKAKVKTFADYSVLGYHVGKTLGNDVPYFKNLKPEKTEFLKELGAAMGATGSIALYHVEGETPEYREAITDKLETITVEDSDLKAVRESFQDDWSDIDMILIGCPHASLPEVKEIAELLRMRGKPLKIPLFITASRAVKALADALGYTEIIERYNGKIIPDSCFVVSPIKGWYRGIATNSGKSAFYFRSFGFSVRLDDVENLIKEAP</sequence>
<name>PMDHL_THEKO</name>
<reference key="1">
    <citation type="journal article" date="2005" name="Genome Res.">
        <title>Complete genome sequence of the hyperthermophilic archaeon Thermococcus kodakaraensis KOD1 and comparison with Pyrococcus genomes.</title>
        <authorList>
            <person name="Fukui T."/>
            <person name="Atomi H."/>
            <person name="Kanai T."/>
            <person name="Matsumi R."/>
            <person name="Fujiwara S."/>
            <person name="Imanaka T."/>
        </authorList>
    </citation>
    <scope>NUCLEOTIDE SEQUENCE [LARGE SCALE GENOMIC DNA]</scope>
    <source>
        <strain>ATCC BAA-918 / JCM 12380 / KOD1</strain>
    </source>
</reference>
<reference evidence="7 8" key="2">
    <citation type="journal article" date="2021" name="Commun. Biol.">
        <title>Crystal structures of aconitase X enzymes from bacteria and archaea provide insights into the molecular evolution of the aconitase superfamily.</title>
        <authorList>
            <person name="Watanabe S."/>
            <person name="Murase Y."/>
            <person name="Watanabe Y."/>
            <person name="Sakurai Y."/>
            <person name="Tajima K."/>
        </authorList>
    </citation>
    <scope>X-RAY CRYSTALLOGRAPHY (1.90 ANGSTROMS) IN COMPLEX WITH PHOSPHOMEVALONATE AND [3FE-4S] CLUSTER</scope>
    <scope>COFACTOR</scope>
    <scope>SUBUNIT</scope>
</reference>
<keyword id="KW-0002">3D-structure</keyword>
<keyword id="KW-0004">4Fe-4S</keyword>
<keyword id="KW-0408">Iron</keyword>
<keyword id="KW-0411">Iron-sulfur</keyword>
<keyword id="KW-0414">Isoprene biosynthesis</keyword>
<keyword id="KW-0456">Lyase</keyword>
<keyword id="KW-0479">Metal-binding</keyword>
<keyword id="KW-1185">Reference proteome</keyword>
<evidence type="ECO:0000250" key="1">
    <source>
        <dbReference type="UniProtKB" id="Q9YA51"/>
    </source>
</evidence>
<evidence type="ECO:0000269" key="2">
    <source>
    </source>
</evidence>
<evidence type="ECO:0000303" key="3">
    <source>
    </source>
</evidence>
<evidence type="ECO:0000305" key="4"/>
<evidence type="ECO:0000305" key="5">
    <source>
    </source>
</evidence>
<evidence type="ECO:0000312" key="6">
    <source>
        <dbReference type="EMBL" id="BAD85438.1"/>
    </source>
</evidence>
<evidence type="ECO:0007744" key="7">
    <source>
        <dbReference type="PDB" id="7CNR"/>
    </source>
</evidence>
<evidence type="ECO:0007744" key="8">
    <source>
        <dbReference type="PDB" id="7CNS"/>
    </source>
</evidence>
<evidence type="ECO:0007829" key="9">
    <source>
        <dbReference type="PDB" id="7CNS"/>
    </source>
</evidence>
<organism>
    <name type="scientific">Thermococcus kodakarensis (strain ATCC BAA-918 / JCM 12380 / KOD1)</name>
    <name type="common">Pyrococcus kodakaraensis (strain KOD1)</name>
    <dbReference type="NCBI Taxonomy" id="69014"/>
    <lineage>
        <taxon>Archaea</taxon>
        <taxon>Methanobacteriati</taxon>
        <taxon>Methanobacteriota</taxon>
        <taxon>Thermococci</taxon>
        <taxon>Thermococcales</taxon>
        <taxon>Thermococcaceae</taxon>
        <taxon>Thermococcus</taxon>
    </lineage>
</organism>
<dbReference type="EC" id="4.2.1.182" evidence="1"/>
<dbReference type="EMBL" id="AP006878">
    <property type="protein sequence ID" value="BAD85438.1"/>
    <property type="molecule type" value="Genomic_DNA"/>
</dbReference>
<dbReference type="RefSeq" id="WP_011250200.1">
    <property type="nucleotide sequence ID" value="NC_006624.1"/>
</dbReference>
<dbReference type="PDB" id="7CNR">
    <property type="method" value="X-ray"/>
    <property type="resolution" value="3.39 A"/>
    <property type="chains" value="A/C/E/G=1-386"/>
</dbReference>
<dbReference type="PDB" id="7CNS">
    <property type="method" value="X-ray"/>
    <property type="resolution" value="1.90 A"/>
    <property type="chains" value="A=1-386"/>
</dbReference>
<dbReference type="PDBsum" id="7CNR"/>
<dbReference type="PDBsum" id="7CNS"/>
<dbReference type="SMR" id="Q5JGJ6"/>
<dbReference type="FunCoup" id="Q5JGJ6">
    <property type="interactions" value="11"/>
</dbReference>
<dbReference type="STRING" id="69014.TK1249"/>
<dbReference type="EnsemblBacteria" id="BAD85438">
    <property type="protein sequence ID" value="BAD85438"/>
    <property type="gene ID" value="TK1249"/>
</dbReference>
<dbReference type="GeneID" id="78447765"/>
<dbReference type="KEGG" id="tko:TK1249"/>
<dbReference type="PATRIC" id="fig|69014.16.peg.1222"/>
<dbReference type="eggNOG" id="arCOG04278">
    <property type="taxonomic scope" value="Archaea"/>
</dbReference>
<dbReference type="HOGENOM" id="CLU_018825_1_0_2"/>
<dbReference type="InParanoid" id="Q5JGJ6"/>
<dbReference type="OrthoDB" id="25253at2157"/>
<dbReference type="PhylomeDB" id="Q5JGJ6"/>
<dbReference type="UniPathway" id="UPA00057"/>
<dbReference type="Proteomes" id="UP000000536">
    <property type="component" value="Chromosome"/>
</dbReference>
<dbReference type="GO" id="GO:0051539">
    <property type="term" value="F:4 iron, 4 sulfur cluster binding"/>
    <property type="evidence" value="ECO:0007669"/>
    <property type="project" value="UniProtKB-KW"/>
</dbReference>
<dbReference type="GO" id="GO:0016829">
    <property type="term" value="F:lyase activity"/>
    <property type="evidence" value="ECO:0007669"/>
    <property type="project" value="UniProtKB-KW"/>
</dbReference>
<dbReference type="GO" id="GO:0046872">
    <property type="term" value="F:metal ion binding"/>
    <property type="evidence" value="ECO:0007669"/>
    <property type="project" value="UniProtKB-KW"/>
</dbReference>
<dbReference type="GO" id="GO:0008299">
    <property type="term" value="P:isoprenoid biosynthetic process"/>
    <property type="evidence" value="ECO:0007669"/>
    <property type="project" value="UniProtKB-KW"/>
</dbReference>
<dbReference type="CDD" id="cd01355">
    <property type="entry name" value="AcnX"/>
    <property type="match status" value="1"/>
</dbReference>
<dbReference type="InterPro" id="IPR007506">
    <property type="entry name" value="PMDh-L-like_dom"/>
</dbReference>
<dbReference type="PANTHER" id="PTHR36577">
    <property type="entry name" value="DUF521 DOMAIN PROTEIN (AFU_ORTHOLOGUE AFUA_6G00490)"/>
    <property type="match status" value="1"/>
</dbReference>
<dbReference type="PANTHER" id="PTHR36577:SF3">
    <property type="entry name" value="DUF521 DOMAIN PROTEIN (AFU_ORTHOLOGUE AFUA_6G00490)"/>
    <property type="match status" value="1"/>
</dbReference>
<dbReference type="Pfam" id="PF04412">
    <property type="entry name" value="AcnX"/>
    <property type="match status" value="1"/>
</dbReference>